<keyword id="KW-0210">Decarboxylase</keyword>
<keyword id="KW-0456">Lyase</keyword>
<keyword id="KW-0597">Phosphoprotein</keyword>
<keyword id="KW-0620">Polyamine biosynthesis</keyword>
<keyword id="KW-0663">Pyridoxal phosphate</keyword>
<keyword id="KW-1185">Reference proteome</keyword>
<comment type="function">
    <text evidence="4">Catalyzes the first and rate-limiting step of polyamine biosynthesis that converts ornithine into putrescine, which is the precursor for the polyamines, spermidine and spermine. Polyamines are essential for cell proliferation and are implicated in cellular processes, ranging from DNA replication to apoptosis.</text>
</comment>
<comment type="catalytic activity">
    <reaction evidence="4">
        <text>L-ornithine + H(+) = putrescine + CO2</text>
        <dbReference type="Rhea" id="RHEA:22964"/>
        <dbReference type="ChEBI" id="CHEBI:15378"/>
        <dbReference type="ChEBI" id="CHEBI:16526"/>
        <dbReference type="ChEBI" id="CHEBI:46911"/>
        <dbReference type="ChEBI" id="CHEBI:326268"/>
        <dbReference type="EC" id="4.1.1.17"/>
    </reaction>
</comment>
<comment type="cofactor">
    <cofactor evidence="4">
        <name>pyridoxal 5'-phosphate</name>
        <dbReference type="ChEBI" id="CHEBI:597326"/>
    </cofactor>
</comment>
<comment type="activity regulation">
    <text evidence="4">Inhibited by antizymes (AZs) in response to polyamine levels. AZs inhibit the assembly of the functional homodimer by binding to ODC monomers and targeting them for ubiquitin-independent proteolytic destruction by the 26S proteasome.</text>
</comment>
<comment type="pathway">
    <text>Amine and polyamine biosynthesis; putrescine biosynthesis via L-ornithine pathway; putrescine from L-ornithine: step 1/1.</text>
</comment>
<comment type="subunit">
    <text evidence="4">Homodimer. Only the dimer is catalytically active, as the active sites are constructed of residues from both monomers.</text>
</comment>
<comment type="similarity">
    <text evidence="5">Belongs to the Orn/Lys/Arg decarboxylase class-II family.</text>
</comment>
<accession>P27118</accession>
<dbReference type="EC" id="4.1.1.17"/>
<dbReference type="EMBL" id="X64710">
    <property type="protein sequence ID" value="CAA45965.1"/>
    <property type="molecule type" value="mRNA"/>
</dbReference>
<dbReference type="PIR" id="A48386">
    <property type="entry name" value="DCCHO"/>
</dbReference>
<dbReference type="RefSeq" id="NP_001161238.1">
    <property type="nucleotide sequence ID" value="NM_001167766.1"/>
</dbReference>
<dbReference type="SMR" id="P27118"/>
<dbReference type="FunCoup" id="P27118">
    <property type="interactions" value="454"/>
</dbReference>
<dbReference type="STRING" id="9031.ENSGALP00000026476"/>
<dbReference type="PaxDb" id="9031-ENSGALP00000026476"/>
<dbReference type="GeneID" id="421937"/>
<dbReference type="KEGG" id="gga:421937"/>
<dbReference type="CTD" id="421937"/>
<dbReference type="VEuPathDB" id="HostDB:geneid_421937"/>
<dbReference type="eggNOG" id="KOG0622">
    <property type="taxonomic scope" value="Eukaryota"/>
</dbReference>
<dbReference type="InParanoid" id="P27118"/>
<dbReference type="OrthoDB" id="5034579at2759"/>
<dbReference type="PhylomeDB" id="P27118"/>
<dbReference type="UniPathway" id="UPA00535">
    <property type="reaction ID" value="UER00288"/>
</dbReference>
<dbReference type="Proteomes" id="UP000000539">
    <property type="component" value="Unassembled WGS sequence"/>
</dbReference>
<dbReference type="GO" id="GO:0005737">
    <property type="term" value="C:cytoplasm"/>
    <property type="evidence" value="ECO:0000250"/>
    <property type="project" value="UniProtKB"/>
</dbReference>
<dbReference type="GO" id="GO:0004586">
    <property type="term" value="F:ornithine decarboxylase activity"/>
    <property type="evidence" value="ECO:0000318"/>
    <property type="project" value="GO_Central"/>
</dbReference>
<dbReference type="GO" id="GO:0033387">
    <property type="term" value="P:putrescine biosynthetic process from arginine, via ornithine"/>
    <property type="evidence" value="ECO:0000318"/>
    <property type="project" value="GO_Central"/>
</dbReference>
<dbReference type="CDD" id="cd00622">
    <property type="entry name" value="PLPDE_III_ODC"/>
    <property type="match status" value="1"/>
</dbReference>
<dbReference type="FunFam" id="2.40.37.10:FF:000005">
    <property type="entry name" value="Ornithine decarboxylase"/>
    <property type="match status" value="1"/>
</dbReference>
<dbReference type="FunFam" id="3.20.20.10:FF:000006">
    <property type="entry name" value="Ornithine decarboxylase 1"/>
    <property type="match status" value="1"/>
</dbReference>
<dbReference type="Gene3D" id="3.20.20.10">
    <property type="entry name" value="Alanine racemase"/>
    <property type="match status" value="1"/>
</dbReference>
<dbReference type="Gene3D" id="2.40.37.10">
    <property type="entry name" value="Lyase, Ornithine Decarboxylase, Chain A, domain 1"/>
    <property type="match status" value="1"/>
</dbReference>
<dbReference type="InterPro" id="IPR009006">
    <property type="entry name" value="Ala_racemase/Decarboxylase_C"/>
</dbReference>
<dbReference type="InterPro" id="IPR022643">
    <property type="entry name" value="De-COase2_C"/>
</dbReference>
<dbReference type="InterPro" id="IPR022657">
    <property type="entry name" value="De-COase2_CS"/>
</dbReference>
<dbReference type="InterPro" id="IPR022644">
    <property type="entry name" value="De-COase2_N"/>
</dbReference>
<dbReference type="InterPro" id="IPR022653">
    <property type="entry name" value="De-COase2_pyr-phos_BS"/>
</dbReference>
<dbReference type="InterPro" id="IPR000183">
    <property type="entry name" value="Orn/DAP/Arg_de-COase"/>
</dbReference>
<dbReference type="InterPro" id="IPR002433">
    <property type="entry name" value="Orn_de-COase"/>
</dbReference>
<dbReference type="InterPro" id="IPR029066">
    <property type="entry name" value="PLP-binding_barrel"/>
</dbReference>
<dbReference type="PANTHER" id="PTHR11482">
    <property type="entry name" value="ARGININE/DIAMINOPIMELATE/ORNITHINE DECARBOXYLASE"/>
    <property type="match status" value="1"/>
</dbReference>
<dbReference type="PANTHER" id="PTHR11482:SF42">
    <property type="entry name" value="ORNITHINE DECARBOXYLASE"/>
    <property type="match status" value="1"/>
</dbReference>
<dbReference type="Pfam" id="PF02784">
    <property type="entry name" value="Orn_Arg_deC_N"/>
    <property type="match status" value="1"/>
</dbReference>
<dbReference type="Pfam" id="PF00278">
    <property type="entry name" value="Orn_DAP_Arg_deC"/>
    <property type="match status" value="1"/>
</dbReference>
<dbReference type="PRINTS" id="PR01179">
    <property type="entry name" value="ODADCRBXLASE"/>
</dbReference>
<dbReference type="PRINTS" id="PR01182">
    <property type="entry name" value="ORNDCRBXLASE"/>
</dbReference>
<dbReference type="SUPFAM" id="SSF50621">
    <property type="entry name" value="Alanine racemase C-terminal domain-like"/>
    <property type="match status" value="1"/>
</dbReference>
<dbReference type="SUPFAM" id="SSF51419">
    <property type="entry name" value="PLP-binding barrel"/>
    <property type="match status" value="1"/>
</dbReference>
<dbReference type="PROSITE" id="PS00878">
    <property type="entry name" value="ODR_DC_2_1"/>
    <property type="match status" value="1"/>
</dbReference>
<dbReference type="PROSITE" id="PS00879">
    <property type="entry name" value="ODR_DC_2_2"/>
    <property type="match status" value="1"/>
</dbReference>
<evidence type="ECO:0000250" key="1"/>
<evidence type="ECO:0000250" key="2">
    <source>
        <dbReference type="UniProtKB" id="P00860"/>
    </source>
</evidence>
<evidence type="ECO:0000250" key="3">
    <source>
        <dbReference type="UniProtKB" id="P07805"/>
    </source>
</evidence>
<evidence type="ECO:0000250" key="4">
    <source>
        <dbReference type="UniProtKB" id="P11926"/>
    </source>
</evidence>
<evidence type="ECO:0000305" key="5"/>
<feature type="chain" id="PRO_0000149895" description="Ornithine decarboxylase">
    <location>
        <begin position="1" status="less than"/>
        <end position="450"/>
    </location>
</feature>
<feature type="active site" description="Proton donor; shared with dimeric partner" evidence="4">
    <location>
        <position position="350"/>
    </location>
</feature>
<feature type="binding site" evidence="4">
    <location>
        <position position="190"/>
    </location>
    <ligand>
        <name>pyridoxal 5'-phosphate</name>
        <dbReference type="ChEBI" id="CHEBI:597326"/>
    </ligand>
</feature>
<feature type="binding site" evidence="4">
    <location>
        <position position="227"/>
    </location>
    <ligand>
        <name>pyridoxal 5'-phosphate</name>
        <dbReference type="ChEBI" id="CHEBI:597326"/>
    </ligand>
</feature>
<feature type="binding site" evidence="4">
    <location>
        <begin position="264"/>
        <end position="267"/>
    </location>
    <ligand>
        <name>pyridoxal 5'-phosphate</name>
        <dbReference type="ChEBI" id="CHEBI:597326"/>
    </ligand>
</feature>
<feature type="binding site" description="in other chain" evidence="3">
    <location>
        <begin position="321"/>
        <end position="322"/>
    </location>
    <ligand>
        <name>substrate</name>
        <note>ligand shared between dimeric partners</note>
    </ligand>
</feature>
<feature type="binding site" evidence="3">
    <location>
        <position position="351"/>
    </location>
    <ligand>
        <name>substrate</name>
        <note>ligand shared between dimeric partners</note>
    </ligand>
</feature>
<feature type="binding site" evidence="4">
    <location>
        <position position="379"/>
    </location>
    <ligand>
        <name>pyridoxal 5'-phosphate</name>
        <dbReference type="ChEBI" id="CHEBI:597326"/>
    </ligand>
</feature>
<feature type="site" description="Stacks against the aromatic ring of pyridoxal phosphate and stabilizes reaction intermediates" evidence="2">
    <location>
        <position position="187"/>
    </location>
</feature>
<feature type="modified residue" description="N6-(pyridoxal phosphate)lysine" evidence="4">
    <location>
        <position position="59"/>
    </location>
</feature>
<feature type="modified residue" description="Phosphoserine; by CK2" evidence="1">
    <location>
        <position position="293"/>
    </location>
</feature>
<feature type="non-terminal residue">
    <location>
        <position position="1"/>
    </location>
</feature>
<protein>
    <recommendedName>
        <fullName>Ornithine decarboxylase</fullName>
        <shortName>ODC</shortName>
        <ecNumber>4.1.1.17</ecNumber>
    </recommendedName>
</protein>
<name>DCOR_CHICK</name>
<organism>
    <name type="scientific">Gallus gallus</name>
    <name type="common">Chicken</name>
    <dbReference type="NCBI Taxonomy" id="9031"/>
    <lineage>
        <taxon>Eukaryota</taxon>
        <taxon>Metazoa</taxon>
        <taxon>Chordata</taxon>
        <taxon>Craniata</taxon>
        <taxon>Vertebrata</taxon>
        <taxon>Euteleostomi</taxon>
        <taxon>Archelosauria</taxon>
        <taxon>Archosauria</taxon>
        <taxon>Dinosauria</taxon>
        <taxon>Saurischia</taxon>
        <taxon>Theropoda</taxon>
        <taxon>Coelurosauria</taxon>
        <taxon>Aves</taxon>
        <taxon>Neognathae</taxon>
        <taxon>Galloanserae</taxon>
        <taxon>Galliformes</taxon>
        <taxon>Phasianidae</taxon>
        <taxon>Phasianinae</taxon>
        <taxon>Gallus</taxon>
    </lineage>
</organism>
<proteinExistence type="evidence at transcript level"/>
<reference key="1">
    <citation type="journal article" date="1992" name="Anim. Genet.">
        <title>Molecular cloning and sequence analysis of a chicken ornithine decarboxylase cDNA.</title>
        <authorList>
            <person name="Johnson R."/>
            <person name="Bulfield G."/>
        </authorList>
    </citation>
    <scope>NUCLEOTIDE SEQUENCE [MRNA]</scope>
    <source>
        <strain>White leghorn</strain>
    </source>
</reference>
<gene>
    <name type="primary">ODC1</name>
    <name type="synonym">ODC</name>
</gene>
<sequence>FTFLDEGFTAKDILDQKINEVSSSDDKDAFYVADLGDIVKKHMRWHKALPRVTPFYAVKCNDSEAVVKTLAVLGAGFDCASKTEIQLVQSIGVPPERIIYANPCKQLSQIKHAANSGVRMMTFDSEVELMKIARPHPKAKLLLRITTDDSKAVCRLSVKFGATLKTSRLLLERAKELDLAIVGVSFHVGSGCTDPETFVQAISDARCVFDMGAELGFNMYLLDIGGGFPGSEDVKLKFEEITSVINPALDKYFPLDSEVTIIAEPGRYYVASAFTLAVNIIAKKIVSKEQTGSDDEDDVNDKTLMYYVNDGVYGSFNCILYDHAHVKPVLQKRPKPDDGCYSCSIWGPTCDGLDRIVERCNMPELQVGDWILFENMGAYTVAAASTFNGFQRPTIHYVMSRPAWQLMQQIKEQEFLAEVEEQDVASLPLSCACESGIEYPATCASASINV</sequence>